<keyword id="KW-0028">Amino-acid biosynthesis</keyword>
<keyword id="KW-0963">Cytoplasm</keyword>
<keyword id="KW-0368">Histidine biosynthesis</keyword>
<keyword id="KW-0456">Lyase</keyword>
<keyword id="KW-1185">Reference proteome</keyword>
<gene>
    <name evidence="1" type="primary">hisB</name>
    <name type="ordered locus">TTE2136</name>
</gene>
<feature type="chain" id="PRO_0000158182" description="Imidazoleglycerol-phosphate dehydratase">
    <location>
        <begin position="1"/>
        <end position="194"/>
    </location>
</feature>
<evidence type="ECO:0000255" key="1">
    <source>
        <dbReference type="HAMAP-Rule" id="MF_00076"/>
    </source>
</evidence>
<protein>
    <recommendedName>
        <fullName evidence="1">Imidazoleglycerol-phosphate dehydratase</fullName>
        <shortName evidence="1">IGPD</shortName>
        <ecNumber evidence="1">4.2.1.19</ecNumber>
    </recommendedName>
</protein>
<accession>P58877</accession>
<comment type="catalytic activity">
    <reaction evidence="1">
        <text>D-erythro-1-(imidazol-4-yl)glycerol 3-phosphate = 3-(imidazol-4-yl)-2-oxopropyl phosphate + H2O</text>
        <dbReference type="Rhea" id="RHEA:11040"/>
        <dbReference type="ChEBI" id="CHEBI:15377"/>
        <dbReference type="ChEBI" id="CHEBI:57766"/>
        <dbReference type="ChEBI" id="CHEBI:58278"/>
        <dbReference type="EC" id="4.2.1.19"/>
    </reaction>
</comment>
<comment type="pathway">
    <text evidence="1">Amino-acid biosynthesis; L-histidine biosynthesis; L-histidine from 5-phospho-alpha-D-ribose 1-diphosphate: step 6/9.</text>
</comment>
<comment type="subcellular location">
    <subcellularLocation>
        <location evidence="1">Cytoplasm</location>
    </subcellularLocation>
</comment>
<comment type="similarity">
    <text evidence="1">Belongs to the imidazoleglycerol-phosphate dehydratase family.</text>
</comment>
<reference key="1">
    <citation type="journal article" date="2002" name="Genome Res.">
        <title>A complete sequence of the T. tengcongensis genome.</title>
        <authorList>
            <person name="Bao Q."/>
            <person name="Tian Y."/>
            <person name="Li W."/>
            <person name="Xu Z."/>
            <person name="Xuan Z."/>
            <person name="Hu S."/>
            <person name="Dong W."/>
            <person name="Yang J."/>
            <person name="Chen Y."/>
            <person name="Xue Y."/>
            <person name="Xu Y."/>
            <person name="Lai X."/>
            <person name="Huang L."/>
            <person name="Dong X."/>
            <person name="Ma Y."/>
            <person name="Ling L."/>
            <person name="Tan H."/>
            <person name="Chen R."/>
            <person name="Wang J."/>
            <person name="Yu J."/>
            <person name="Yang H."/>
        </authorList>
    </citation>
    <scope>NUCLEOTIDE SEQUENCE [LARGE SCALE GENOMIC DNA]</scope>
    <source>
        <strain>DSM 15242 / JCM 11007 / NBRC 100824 / MB4</strain>
    </source>
</reference>
<dbReference type="EC" id="4.2.1.19" evidence="1"/>
<dbReference type="EMBL" id="AE008691">
    <property type="protein sequence ID" value="AAM25301.1"/>
    <property type="molecule type" value="Genomic_DNA"/>
</dbReference>
<dbReference type="RefSeq" id="WP_009610409.1">
    <property type="nucleotide sequence ID" value="NC_003869.1"/>
</dbReference>
<dbReference type="SMR" id="P58877"/>
<dbReference type="STRING" id="273068.TTE2136"/>
<dbReference type="KEGG" id="tte:TTE2136"/>
<dbReference type="eggNOG" id="COG0131">
    <property type="taxonomic scope" value="Bacteria"/>
</dbReference>
<dbReference type="HOGENOM" id="CLU_044308_2_0_9"/>
<dbReference type="OrthoDB" id="9790411at2"/>
<dbReference type="UniPathway" id="UPA00031">
    <property type="reaction ID" value="UER00011"/>
</dbReference>
<dbReference type="Proteomes" id="UP000000555">
    <property type="component" value="Chromosome"/>
</dbReference>
<dbReference type="GO" id="GO:0005737">
    <property type="term" value="C:cytoplasm"/>
    <property type="evidence" value="ECO:0007669"/>
    <property type="project" value="UniProtKB-SubCell"/>
</dbReference>
<dbReference type="GO" id="GO:0004424">
    <property type="term" value="F:imidazoleglycerol-phosphate dehydratase activity"/>
    <property type="evidence" value="ECO:0007669"/>
    <property type="project" value="UniProtKB-UniRule"/>
</dbReference>
<dbReference type="GO" id="GO:0000105">
    <property type="term" value="P:L-histidine biosynthetic process"/>
    <property type="evidence" value="ECO:0007669"/>
    <property type="project" value="UniProtKB-UniRule"/>
</dbReference>
<dbReference type="CDD" id="cd07914">
    <property type="entry name" value="IGPD"/>
    <property type="match status" value="1"/>
</dbReference>
<dbReference type="FunFam" id="3.30.230.40:FF:000001">
    <property type="entry name" value="Imidazoleglycerol-phosphate dehydratase HisB"/>
    <property type="match status" value="1"/>
</dbReference>
<dbReference type="FunFam" id="3.30.230.40:FF:000003">
    <property type="entry name" value="Imidazoleglycerol-phosphate dehydratase HisB"/>
    <property type="match status" value="1"/>
</dbReference>
<dbReference type="Gene3D" id="3.30.230.40">
    <property type="entry name" value="Imidazole glycerol phosphate dehydratase, domain 1"/>
    <property type="match status" value="2"/>
</dbReference>
<dbReference type="HAMAP" id="MF_00076">
    <property type="entry name" value="HisB"/>
    <property type="match status" value="1"/>
</dbReference>
<dbReference type="InterPro" id="IPR038494">
    <property type="entry name" value="IGPD_sf"/>
</dbReference>
<dbReference type="InterPro" id="IPR000807">
    <property type="entry name" value="ImidazoleglycerolP_deHydtase"/>
</dbReference>
<dbReference type="InterPro" id="IPR020565">
    <property type="entry name" value="ImidazoleglycerP_deHydtase_CS"/>
</dbReference>
<dbReference type="InterPro" id="IPR020568">
    <property type="entry name" value="Ribosomal_Su5_D2-typ_SF"/>
</dbReference>
<dbReference type="NCBIfam" id="NF002107">
    <property type="entry name" value="PRK00951.1-2"/>
    <property type="match status" value="1"/>
</dbReference>
<dbReference type="NCBIfam" id="NF002111">
    <property type="entry name" value="PRK00951.2-1"/>
    <property type="match status" value="1"/>
</dbReference>
<dbReference type="NCBIfam" id="NF002112">
    <property type="entry name" value="PRK00951.2-2"/>
    <property type="match status" value="1"/>
</dbReference>
<dbReference type="NCBIfam" id="NF002114">
    <property type="entry name" value="PRK00951.2-4"/>
    <property type="match status" value="1"/>
</dbReference>
<dbReference type="PANTHER" id="PTHR23133:SF2">
    <property type="entry name" value="IMIDAZOLEGLYCEROL-PHOSPHATE DEHYDRATASE"/>
    <property type="match status" value="1"/>
</dbReference>
<dbReference type="PANTHER" id="PTHR23133">
    <property type="entry name" value="IMIDAZOLEGLYCEROL-PHOSPHATE DEHYDRATASE HIS7"/>
    <property type="match status" value="1"/>
</dbReference>
<dbReference type="Pfam" id="PF00475">
    <property type="entry name" value="IGPD"/>
    <property type="match status" value="1"/>
</dbReference>
<dbReference type="SUPFAM" id="SSF54211">
    <property type="entry name" value="Ribosomal protein S5 domain 2-like"/>
    <property type="match status" value="2"/>
</dbReference>
<dbReference type="PROSITE" id="PS00954">
    <property type="entry name" value="IGP_DEHYDRATASE_1"/>
    <property type="match status" value="1"/>
</dbReference>
<dbReference type="PROSITE" id="PS00955">
    <property type="entry name" value="IGP_DEHYDRATASE_2"/>
    <property type="match status" value="1"/>
</dbReference>
<organism>
    <name type="scientific">Caldanaerobacter subterraneus subsp. tengcongensis (strain DSM 15242 / JCM 11007 / NBRC 100824 / MB4)</name>
    <name type="common">Thermoanaerobacter tengcongensis</name>
    <dbReference type="NCBI Taxonomy" id="273068"/>
    <lineage>
        <taxon>Bacteria</taxon>
        <taxon>Bacillati</taxon>
        <taxon>Bacillota</taxon>
        <taxon>Clostridia</taxon>
        <taxon>Thermoanaerobacterales</taxon>
        <taxon>Thermoanaerobacteraceae</taxon>
        <taxon>Caldanaerobacter</taxon>
    </lineage>
</organism>
<proteinExistence type="inferred from homology"/>
<name>HIS7_CALS4</name>
<sequence length="194" mass="21754">MRKAEVKRKTAETDIYVELNIDGKGSYDIKTGIGFFDHMLSLFAKHGLFDLKVIAKGDLEVDTHHTVEDVGIVLGTAFLKASGDKKSIKRFSTFYVPMDEALVRVSLDISGRPYLYYDLPLKAERVGNFETETVEEFFRAFAYNFGITLHVELLHGVNTHHIIEASFKALGKALDEALKLDERIDGIPSTKGIL</sequence>